<proteinExistence type="inferred from homology"/>
<sequence length="366" mass="38904">MSGNTLGTLFTVTTFGESHGPAIGCVIDGCPPGMALNEADIQFELDRRKPGTSRHVTQRQEEDKVEILSGVFEGQTTGAPIALLIRNTDQRSKDYGNIADTFRPGHADYTYWQKYGIRDYRGGGRSSARLTAPTVAAGAVAKKWLREKFGTEIHGYMAALGEIDVPFVDWAHVRENPFFAPNAQIVPQLETYMDALRKDGDSIGARINVVASGVPVGLGEPLFDRLDADIAHAMMGINAVKGVEIGAGFASIAQRGSVHGDELTPEGFVGNHAGGVLGGISTGQDVTVSIAIKPTSSIRTPRRSIDKAGQPVVVETFGRHDPCVGIRATPIAESMLALVLIDHALRHRAQCGDVAVSTPKIAASAP</sequence>
<comment type="function">
    <text evidence="1">Catalyzes the anti-1,4-elimination of the C-3 phosphate and the C-6 proR hydrogen from 5-enolpyruvylshikimate-3-phosphate (EPSP) to yield chorismate, which is the branch point compound that serves as the starting substrate for the three terminal pathways of aromatic amino acid biosynthesis. This reaction introduces a second double bond into the aromatic ring system.</text>
</comment>
<comment type="catalytic activity">
    <reaction evidence="1">
        <text>5-O-(1-carboxyvinyl)-3-phosphoshikimate = chorismate + phosphate</text>
        <dbReference type="Rhea" id="RHEA:21020"/>
        <dbReference type="ChEBI" id="CHEBI:29748"/>
        <dbReference type="ChEBI" id="CHEBI:43474"/>
        <dbReference type="ChEBI" id="CHEBI:57701"/>
        <dbReference type="EC" id="4.2.3.5"/>
    </reaction>
</comment>
<comment type="cofactor">
    <cofactor evidence="1">
        <name>FMNH2</name>
        <dbReference type="ChEBI" id="CHEBI:57618"/>
    </cofactor>
    <text evidence="1">Reduced FMN (FMNH(2)).</text>
</comment>
<comment type="pathway">
    <text evidence="1">Metabolic intermediate biosynthesis; chorismate biosynthesis; chorismate from D-erythrose 4-phosphate and phosphoenolpyruvate: step 7/7.</text>
</comment>
<comment type="subunit">
    <text evidence="1">Homotetramer.</text>
</comment>
<comment type="similarity">
    <text evidence="1">Belongs to the chorismate synthase family.</text>
</comment>
<protein>
    <recommendedName>
        <fullName evidence="1">Chorismate synthase</fullName>
        <shortName evidence="1">CS</shortName>
        <ecNumber evidence="1">4.2.3.5</ecNumber>
    </recommendedName>
    <alternativeName>
        <fullName evidence="1">5-enolpyruvylshikimate-3-phosphate phospholyase</fullName>
    </alternativeName>
</protein>
<feature type="chain" id="PRO_1000115337" description="Chorismate synthase">
    <location>
        <begin position="1"/>
        <end position="366"/>
    </location>
</feature>
<feature type="binding site" evidence="1">
    <location>
        <position position="48"/>
    </location>
    <ligand>
        <name>NADP(+)</name>
        <dbReference type="ChEBI" id="CHEBI:58349"/>
    </ligand>
</feature>
<feature type="binding site" evidence="1">
    <location>
        <position position="54"/>
    </location>
    <ligand>
        <name>NADP(+)</name>
        <dbReference type="ChEBI" id="CHEBI:58349"/>
    </ligand>
</feature>
<feature type="binding site" evidence="1">
    <location>
        <begin position="125"/>
        <end position="127"/>
    </location>
    <ligand>
        <name>FMN</name>
        <dbReference type="ChEBI" id="CHEBI:58210"/>
    </ligand>
</feature>
<feature type="binding site" evidence="1">
    <location>
        <begin position="238"/>
        <end position="239"/>
    </location>
    <ligand>
        <name>FMN</name>
        <dbReference type="ChEBI" id="CHEBI:58210"/>
    </ligand>
</feature>
<feature type="binding site" evidence="1">
    <location>
        <position position="278"/>
    </location>
    <ligand>
        <name>FMN</name>
        <dbReference type="ChEBI" id="CHEBI:58210"/>
    </ligand>
</feature>
<feature type="binding site" evidence="1">
    <location>
        <begin position="293"/>
        <end position="297"/>
    </location>
    <ligand>
        <name>FMN</name>
        <dbReference type="ChEBI" id="CHEBI:58210"/>
    </ligand>
</feature>
<feature type="binding site" evidence="1">
    <location>
        <position position="319"/>
    </location>
    <ligand>
        <name>FMN</name>
        <dbReference type="ChEBI" id="CHEBI:58210"/>
    </ligand>
</feature>
<evidence type="ECO:0000255" key="1">
    <source>
        <dbReference type="HAMAP-Rule" id="MF_00300"/>
    </source>
</evidence>
<accession>B2SZH3</accession>
<organism>
    <name type="scientific">Paraburkholderia phytofirmans (strain DSM 17436 / LMG 22146 / PsJN)</name>
    <name type="common">Burkholderia phytofirmans</name>
    <dbReference type="NCBI Taxonomy" id="398527"/>
    <lineage>
        <taxon>Bacteria</taxon>
        <taxon>Pseudomonadati</taxon>
        <taxon>Pseudomonadota</taxon>
        <taxon>Betaproteobacteria</taxon>
        <taxon>Burkholderiales</taxon>
        <taxon>Burkholderiaceae</taxon>
        <taxon>Paraburkholderia</taxon>
    </lineage>
</organism>
<reference key="1">
    <citation type="journal article" date="2011" name="J. Bacteriol.">
        <title>Complete genome sequence of the plant growth-promoting endophyte Burkholderia phytofirmans strain PsJN.</title>
        <authorList>
            <person name="Weilharter A."/>
            <person name="Mitter B."/>
            <person name="Shin M.V."/>
            <person name="Chain P.S."/>
            <person name="Nowak J."/>
            <person name="Sessitsch A."/>
        </authorList>
    </citation>
    <scope>NUCLEOTIDE SEQUENCE [LARGE SCALE GENOMIC DNA]</scope>
    <source>
        <strain>DSM 17436 / LMG 22146 / PsJN</strain>
    </source>
</reference>
<gene>
    <name evidence="1" type="primary">aroC</name>
    <name type="ordered locus">Bphyt_2767</name>
</gene>
<dbReference type="EC" id="4.2.3.5" evidence="1"/>
<dbReference type="EMBL" id="CP001052">
    <property type="protein sequence ID" value="ACD17161.1"/>
    <property type="molecule type" value="Genomic_DNA"/>
</dbReference>
<dbReference type="RefSeq" id="WP_012433751.1">
    <property type="nucleotide sequence ID" value="NC_010681.1"/>
</dbReference>
<dbReference type="SMR" id="B2SZH3"/>
<dbReference type="STRING" id="398527.Bphyt_2767"/>
<dbReference type="KEGG" id="bpy:Bphyt_2767"/>
<dbReference type="eggNOG" id="COG0082">
    <property type="taxonomic scope" value="Bacteria"/>
</dbReference>
<dbReference type="HOGENOM" id="CLU_034547_0_2_4"/>
<dbReference type="OrthoDB" id="9771806at2"/>
<dbReference type="UniPathway" id="UPA00053">
    <property type="reaction ID" value="UER00090"/>
</dbReference>
<dbReference type="Proteomes" id="UP000001739">
    <property type="component" value="Chromosome 1"/>
</dbReference>
<dbReference type="GO" id="GO:0005829">
    <property type="term" value="C:cytosol"/>
    <property type="evidence" value="ECO:0007669"/>
    <property type="project" value="TreeGrafter"/>
</dbReference>
<dbReference type="GO" id="GO:0004107">
    <property type="term" value="F:chorismate synthase activity"/>
    <property type="evidence" value="ECO:0007669"/>
    <property type="project" value="UniProtKB-UniRule"/>
</dbReference>
<dbReference type="GO" id="GO:0010181">
    <property type="term" value="F:FMN binding"/>
    <property type="evidence" value="ECO:0007669"/>
    <property type="project" value="TreeGrafter"/>
</dbReference>
<dbReference type="GO" id="GO:0008652">
    <property type="term" value="P:amino acid biosynthetic process"/>
    <property type="evidence" value="ECO:0007669"/>
    <property type="project" value="UniProtKB-KW"/>
</dbReference>
<dbReference type="GO" id="GO:0009073">
    <property type="term" value="P:aromatic amino acid family biosynthetic process"/>
    <property type="evidence" value="ECO:0007669"/>
    <property type="project" value="UniProtKB-KW"/>
</dbReference>
<dbReference type="GO" id="GO:0009423">
    <property type="term" value="P:chorismate biosynthetic process"/>
    <property type="evidence" value="ECO:0007669"/>
    <property type="project" value="UniProtKB-UniRule"/>
</dbReference>
<dbReference type="CDD" id="cd07304">
    <property type="entry name" value="Chorismate_synthase"/>
    <property type="match status" value="1"/>
</dbReference>
<dbReference type="FunFam" id="3.60.150.10:FF:000001">
    <property type="entry name" value="Chorismate synthase"/>
    <property type="match status" value="1"/>
</dbReference>
<dbReference type="Gene3D" id="3.60.150.10">
    <property type="entry name" value="Chorismate synthase AroC"/>
    <property type="match status" value="1"/>
</dbReference>
<dbReference type="HAMAP" id="MF_00300">
    <property type="entry name" value="Chorismate_synth"/>
    <property type="match status" value="1"/>
</dbReference>
<dbReference type="InterPro" id="IPR000453">
    <property type="entry name" value="Chorismate_synth"/>
</dbReference>
<dbReference type="InterPro" id="IPR035904">
    <property type="entry name" value="Chorismate_synth_AroC_sf"/>
</dbReference>
<dbReference type="InterPro" id="IPR020541">
    <property type="entry name" value="Chorismate_synthase_CS"/>
</dbReference>
<dbReference type="NCBIfam" id="TIGR00033">
    <property type="entry name" value="aroC"/>
    <property type="match status" value="1"/>
</dbReference>
<dbReference type="NCBIfam" id="NF003793">
    <property type="entry name" value="PRK05382.1"/>
    <property type="match status" value="1"/>
</dbReference>
<dbReference type="PANTHER" id="PTHR21085">
    <property type="entry name" value="CHORISMATE SYNTHASE"/>
    <property type="match status" value="1"/>
</dbReference>
<dbReference type="PANTHER" id="PTHR21085:SF0">
    <property type="entry name" value="CHORISMATE SYNTHASE"/>
    <property type="match status" value="1"/>
</dbReference>
<dbReference type="Pfam" id="PF01264">
    <property type="entry name" value="Chorismate_synt"/>
    <property type="match status" value="1"/>
</dbReference>
<dbReference type="PIRSF" id="PIRSF001456">
    <property type="entry name" value="Chorismate_synth"/>
    <property type="match status" value="1"/>
</dbReference>
<dbReference type="SUPFAM" id="SSF103263">
    <property type="entry name" value="Chorismate synthase, AroC"/>
    <property type="match status" value="1"/>
</dbReference>
<dbReference type="PROSITE" id="PS00787">
    <property type="entry name" value="CHORISMATE_SYNTHASE_1"/>
    <property type="match status" value="1"/>
</dbReference>
<dbReference type="PROSITE" id="PS00788">
    <property type="entry name" value="CHORISMATE_SYNTHASE_2"/>
    <property type="match status" value="1"/>
</dbReference>
<dbReference type="PROSITE" id="PS00789">
    <property type="entry name" value="CHORISMATE_SYNTHASE_3"/>
    <property type="match status" value="1"/>
</dbReference>
<name>AROC_PARPJ</name>
<keyword id="KW-0028">Amino-acid biosynthesis</keyword>
<keyword id="KW-0057">Aromatic amino acid biosynthesis</keyword>
<keyword id="KW-0274">FAD</keyword>
<keyword id="KW-0285">Flavoprotein</keyword>
<keyword id="KW-0288">FMN</keyword>
<keyword id="KW-0456">Lyase</keyword>
<keyword id="KW-0521">NADP</keyword>